<evidence type="ECO:0000255" key="1">
    <source>
        <dbReference type="HAMAP-Rule" id="MF_01007"/>
    </source>
</evidence>
<accession>B2UCY5</accession>
<feature type="chain" id="PRO_0000387065" description="Ribosomal RNA small subunit methyltransferase H">
    <location>
        <begin position="1"/>
        <end position="319"/>
    </location>
</feature>
<feature type="binding site" evidence="1">
    <location>
        <begin position="39"/>
        <end position="41"/>
    </location>
    <ligand>
        <name>S-adenosyl-L-methionine</name>
        <dbReference type="ChEBI" id="CHEBI:59789"/>
    </ligand>
</feature>
<feature type="binding site" evidence="1">
    <location>
        <position position="59"/>
    </location>
    <ligand>
        <name>S-adenosyl-L-methionine</name>
        <dbReference type="ChEBI" id="CHEBI:59789"/>
    </ligand>
</feature>
<feature type="binding site" evidence="1">
    <location>
        <position position="83"/>
    </location>
    <ligand>
        <name>S-adenosyl-L-methionine</name>
        <dbReference type="ChEBI" id="CHEBI:59789"/>
    </ligand>
</feature>
<feature type="binding site" evidence="1">
    <location>
        <position position="104"/>
    </location>
    <ligand>
        <name>S-adenosyl-L-methionine</name>
        <dbReference type="ChEBI" id="CHEBI:59789"/>
    </ligand>
</feature>
<feature type="binding site" evidence="1">
    <location>
        <position position="111"/>
    </location>
    <ligand>
        <name>S-adenosyl-L-methionine</name>
        <dbReference type="ChEBI" id="CHEBI:59789"/>
    </ligand>
</feature>
<proteinExistence type="inferred from homology"/>
<keyword id="KW-0963">Cytoplasm</keyword>
<keyword id="KW-0489">Methyltransferase</keyword>
<keyword id="KW-0698">rRNA processing</keyword>
<keyword id="KW-0949">S-adenosyl-L-methionine</keyword>
<keyword id="KW-0808">Transferase</keyword>
<reference key="1">
    <citation type="submission" date="2008-05" db="EMBL/GenBank/DDBJ databases">
        <title>Complete sequence of chromosome 1 of Ralstonia pickettii 12J.</title>
        <authorList>
            <person name="Lucas S."/>
            <person name="Copeland A."/>
            <person name="Lapidus A."/>
            <person name="Glavina del Rio T."/>
            <person name="Dalin E."/>
            <person name="Tice H."/>
            <person name="Bruce D."/>
            <person name="Goodwin L."/>
            <person name="Pitluck S."/>
            <person name="Meincke L."/>
            <person name="Brettin T."/>
            <person name="Detter J.C."/>
            <person name="Han C."/>
            <person name="Kuske C.R."/>
            <person name="Schmutz J."/>
            <person name="Larimer F."/>
            <person name="Land M."/>
            <person name="Hauser L."/>
            <person name="Kyrpides N."/>
            <person name="Mikhailova N."/>
            <person name="Marsh T."/>
            <person name="Richardson P."/>
        </authorList>
    </citation>
    <scope>NUCLEOTIDE SEQUENCE [LARGE SCALE GENOMIC DNA]</scope>
    <source>
        <strain>12J</strain>
    </source>
</reference>
<organism>
    <name type="scientific">Ralstonia pickettii (strain 12J)</name>
    <dbReference type="NCBI Taxonomy" id="402626"/>
    <lineage>
        <taxon>Bacteria</taxon>
        <taxon>Pseudomonadati</taxon>
        <taxon>Pseudomonadota</taxon>
        <taxon>Betaproteobacteria</taxon>
        <taxon>Burkholderiales</taxon>
        <taxon>Burkholderiaceae</taxon>
        <taxon>Ralstonia</taxon>
    </lineage>
</organism>
<dbReference type="EC" id="2.1.1.199" evidence="1"/>
<dbReference type="EMBL" id="CP001068">
    <property type="protein sequence ID" value="ACD28220.1"/>
    <property type="molecule type" value="Genomic_DNA"/>
</dbReference>
<dbReference type="SMR" id="B2UCY5"/>
<dbReference type="STRING" id="402626.Rpic_3097"/>
<dbReference type="KEGG" id="rpi:Rpic_3097"/>
<dbReference type="eggNOG" id="COG0275">
    <property type="taxonomic scope" value="Bacteria"/>
</dbReference>
<dbReference type="HOGENOM" id="CLU_038422_2_0_4"/>
<dbReference type="GO" id="GO:0005737">
    <property type="term" value="C:cytoplasm"/>
    <property type="evidence" value="ECO:0007669"/>
    <property type="project" value="UniProtKB-SubCell"/>
</dbReference>
<dbReference type="GO" id="GO:0071424">
    <property type="term" value="F:rRNA (cytosine-N4-)-methyltransferase activity"/>
    <property type="evidence" value="ECO:0007669"/>
    <property type="project" value="UniProtKB-UniRule"/>
</dbReference>
<dbReference type="GO" id="GO:0070475">
    <property type="term" value="P:rRNA base methylation"/>
    <property type="evidence" value="ECO:0007669"/>
    <property type="project" value="UniProtKB-UniRule"/>
</dbReference>
<dbReference type="Gene3D" id="1.10.150.170">
    <property type="entry name" value="Putative methyltransferase TM0872, insert domain"/>
    <property type="match status" value="1"/>
</dbReference>
<dbReference type="Gene3D" id="3.40.50.150">
    <property type="entry name" value="Vaccinia Virus protein VP39"/>
    <property type="match status" value="1"/>
</dbReference>
<dbReference type="HAMAP" id="MF_01007">
    <property type="entry name" value="16SrRNA_methyltr_H"/>
    <property type="match status" value="1"/>
</dbReference>
<dbReference type="InterPro" id="IPR002903">
    <property type="entry name" value="RsmH"/>
</dbReference>
<dbReference type="InterPro" id="IPR023397">
    <property type="entry name" value="SAM-dep_MeTrfase_MraW_recog"/>
</dbReference>
<dbReference type="InterPro" id="IPR029063">
    <property type="entry name" value="SAM-dependent_MTases_sf"/>
</dbReference>
<dbReference type="NCBIfam" id="TIGR00006">
    <property type="entry name" value="16S rRNA (cytosine(1402)-N(4))-methyltransferase RsmH"/>
    <property type="match status" value="1"/>
</dbReference>
<dbReference type="PANTHER" id="PTHR11265:SF0">
    <property type="entry name" value="12S RRNA N4-METHYLCYTIDINE METHYLTRANSFERASE"/>
    <property type="match status" value="1"/>
</dbReference>
<dbReference type="PANTHER" id="PTHR11265">
    <property type="entry name" value="S-ADENOSYL-METHYLTRANSFERASE MRAW"/>
    <property type="match status" value="1"/>
</dbReference>
<dbReference type="Pfam" id="PF01795">
    <property type="entry name" value="Methyltransf_5"/>
    <property type="match status" value="1"/>
</dbReference>
<dbReference type="PIRSF" id="PIRSF004486">
    <property type="entry name" value="MraW"/>
    <property type="match status" value="1"/>
</dbReference>
<dbReference type="SUPFAM" id="SSF81799">
    <property type="entry name" value="Putative methyltransferase TM0872, insert domain"/>
    <property type="match status" value="1"/>
</dbReference>
<dbReference type="SUPFAM" id="SSF53335">
    <property type="entry name" value="S-adenosyl-L-methionine-dependent methyltransferases"/>
    <property type="match status" value="1"/>
</dbReference>
<comment type="function">
    <text evidence="1">Specifically methylates the N4 position of cytidine in position 1402 (C1402) of 16S rRNA.</text>
</comment>
<comment type="catalytic activity">
    <reaction evidence="1">
        <text>cytidine(1402) in 16S rRNA + S-adenosyl-L-methionine = N(4)-methylcytidine(1402) in 16S rRNA + S-adenosyl-L-homocysteine + H(+)</text>
        <dbReference type="Rhea" id="RHEA:42928"/>
        <dbReference type="Rhea" id="RHEA-COMP:10286"/>
        <dbReference type="Rhea" id="RHEA-COMP:10287"/>
        <dbReference type="ChEBI" id="CHEBI:15378"/>
        <dbReference type="ChEBI" id="CHEBI:57856"/>
        <dbReference type="ChEBI" id="CHEBI:59789"/>
        <dbReference type="ChEBI" id="CHEBI:74506"/>
        <dbReference type="ChEBI" id="CHEBI:82748"/>
        <dbReference type="EC" id="2.1.1.199"/>
    </reaction>
</comment>
<comment type="subcellular location">
    <subcellularLocation>
        <location evidence="1">Cytoplasm</location>
    </subcellularLocation>
</comment>
<comment type="similarity">
    <text evidence="1">Belongs to the methyltransferase superfamily. RsmH family.</text>
</comment>
<gene>
    <name evidence="1" type="primary">rsmH</name>
    <name type="synonym">mraW</name>
    <name type="ordered locus">Rpic_3097</name>
</gene>
<sequence length="319" mass="35123">MTTQTSTGLRHQTVLLDEAVDALIWRDDGIYIDGTFGRGGHSRRILERLGPGGRLVAFDKDPAAITEAGTVEDARFAIEHDSFAQMARCLDARGVEQVAGVLLDLGISSPQIDEGARGFSFRMDGPLDMRMDTTRGITAAQWLAEADERDIARVIRDYGEERFAVQIAKAIVARRGQSGDRGPLDRTSELAALVAQAVKTREKGQDPATRTFQALRIHVNQELADLETGLKAAFDRLEQGGRLVVISFHSLEDRIVKRFMQALARPEQSAAPELRRAPLRAHELPAPQLRLLGRVKPSEAEVSANPRARSAIMRVAERC</sequence>
<name>RSMH_RALPJ</name>
<protein>
    <recommendedName>
        <fullName evidence="1">Ribosomal RNA small subunit methyltransferase H</fullName>
        <ecNumber evidence="1">2.1.1.199</ecNumber>
    </recommendedName>
    <alternativeName>
        <fullName evidence="1">16S rRNA m(4)C1402 methyltransferase</fullName>
    </alternativeName>
    <alternativeName>
        <fullName evidence="1">rRNA (cytosine-N(4)-)-methyltransferase RsmH</fullName>
    </alternativeName>
</protein>